<accession>Q5F6K4</accession>
<gene>
    <name evidence="1" type="primary">uppP</name>
    <name type="ordered locus">NGO_1547</name>
</gene>
<organism>
    <name type="scientific">Neisseria gonorrhoeae (strain ATCC 700825 / FA 1090)</name>
    <dbReference type="NCBI Taxonomy" id="242231"/>
    <lineage>
        <taxon>Bacteria</taxon>
        <taxon>Pseudomonadati</taxon>
        <taxon>Pseudomonadota</taxon>
        <taxon>Betaproteobacteria</taxon>
        <taxon>Neisseriales</taxon>
        <taxon>Neisseriaceae</taxon>
        <taxon>Neisseria</taxon>
    </lineage>
</organism>
<proteinExistence type="inferred from homology"/>
<evidence type="ECO:0000255" key="1">
    <source>
        <dbReference type="HAMAP-Rule" id="MF_01006"/>
    </source>
</evidence>
<keyword id="KW-0046">Antibiotic resistance</keyword>
<keyword id="KW-0997">Cell inner membrane</keyword>
<keyword id="KW-1003">Cell membrane</keyword>
<keyword id="KW-0133">Cell shape</keyword>
<keyword id="KW-0961">Cell wall biogenesis/degradation</keyword>
<keyword id="KW-0378">Hydrolase</keyword>
<keyword id="KW-0472">Membrane</keyword>
<keyword id="KW-0573">Peptidoglycan synthesis</keyword>
<keyword id="KW-1185">Reference proteome</keyword>
<keyword id="KW-0812">Transmembrane</keyword>
<keyword id="KW-1133">Transmembrane helix</keyword>
<protein>
    <recommendedName>
        <fullName evidence="1">Undecaprenyl-diphosphatase</fullName>
        <ecNumber evidence="1">3.6.1.27</ecNumber>
    </recommendedName>
    <alternativeName>
        <fullName evidence="1">Bacitracin resistance protein</fullName>
    </alternativeName>
    <alternativeName>
        <fullName evidence="1">Undecaprenyl pyrophosphate phosphatase</fullName>
    </alternativeName>
</protein>
<sequence length="273" mass="30401">MDFLIVLKALMMGLVEGFTEFLPISSTGHLIVFGNLIGFHSNHKVFEIAIQLGAVLAVVFEYRQRFSNVLHGVGKDRKANRFVLNLAIAFIPAAVMGLLFDKQIKEYLFNPLSVAVMLVLGGFFILWVEKRQSRAEPKIADVDALRPIDALMIGVAQVFALVPGTSRSGSTVMGGMLWGIERKTATEFSFFLAVPMMVAATAYDVLKHYRFFTLHDVGLILIGFIAAFVSGLVAVKALLKFVSKKNYIPFAYYRIVFGIVIIILWLSGWISWE</sequence>
<name>UPPP_NEIG1</name>
<reference key="1">
    <citation type="submission" date="2003-03" db="EMBL/GenBank/DDBJ databases">
        <title>The complete genome sequence of Neisseria gonorrhoeae.</title>
        <authorList>
            <person name="Lewis L.A."/>
            <person name="Gillaspy A.F."/>
            <person name="McLaughlin R.E."/>
            <person name="Gipson M."/>
            <person name="Ducey T.F."/>
            <person name="Ownbey T."/>
            <person name="Hartman K."/>
            <person name="Nydick C."/>
            <person name="Carson M.B."/>
            <person name="Vaughn J."/>
            <person name="Thomson C."/>
            <person name="Song L."/>
            <person name="Lin S."/>
            <person name="Yuan X."/>
            <person name="Najar F."/>
            <person name="Zhan M."/>
            <person name="Ren Q."/>
            <person name="Zhu H."/>
            <person name="Qi S."/>
            <person name="Kenton S.M."/>
            <person name="Lai H."/>
            <person name="White J.D."/>
            <person name="Clifton S."/>
            <person name="Roe B.A."/>
            <person name="Dyer D.W."/>
        </authorList>
    </citation>
    <scope>NUCLEOTIDE SEQUENCE [LARGE SCALE GENOMIC DNA]</scope>
    <source>
        <strain>ATCC 700825 / FA 1090</strain>
    </source>
</reference>
<feature type="chain" id="PRO_0000151167" description="Undecaprenyl-diphosphatase">
    <location>
        <begin position="1"/>
        <end position="273"/>
    </location>
</feature>
<feature type="transmembrane region" description="Helical" evidence="1">
    <location>
        <begin position="13"/>
        <end position="35"/>
    </location>
</feature>
<feature type="transmembrane region" description="Helical" evidence="1">
    <location>
        <begin position="45"/>
        <end position="62"/>
    </location>
</feature>
<feature type="transmembrane region" description="Helical" evidence="1">
    <location>
        <begin position="82"/>
        <end position="102"/>
    </location>
</feature>
<feature type="transmembrane region" description="Helical" evidence="1">
    <location>
        <begin position="108"/>
        <end position="128"/>
    </location>
</feature>
<feature type="transmembrane region" description="Helical" evidence="1">
    <location>
        <begin position="186"/>
        <end position="206"/>
    </location>
</feature>
<feature type="transmembrane region" description="Helical" evidence="1">
    <location>
        <begin position="219"/>
        <end position="239"/>
    </location>
</feature>
<feature type="transmembrane region" description="Helical" evidence="1">
    <location>
        <begin position="250"/>
        <end position="270"/>
    </location>
</feature>
<dbReference type="EC" id="3.6.1.27" evidence="1"/>
<dbReference type="EMBL" id="AE004969">
    <property type="protein sequence ID" value="AAW90183.1"/>
    <property type="molecule type" value="Genomic_DNA"/>
</dbReference>
<dbReference type="RefSeq" id="WP_003689465.1">
    <property type="nucleotide sequence ID" value="NC_002946.2"/>
</dbReference>
<dbReference type="RefSeq" id="YP_208595.1">
    <property type="nucleotide sequence ID" value="NC_002946.2"/>
</dbReference>
<dbReference type="SMR" id="Q5F6K4"/>
<dbReference type="STRING" id="242231.NGO_1547"/>
<dbReference type="KEGG" id="ngo:NGO_1547"/>
<dbReference type="PATRIC" id="fig|242231.10.peg.1844"/>
<dbReference type="HOGENOM" id="CLU_060296_2_0_4"/>
<dbReference type="Proteomes" id="UP000000535">
    <property type="component" value="Chromosome"/>
</dbReference>
<dbReference type="GO" id="GO:0005886">
    <property type="term" value="C:plasma membrane"/>
    <property type="evidence" value="ECO:0007669"/>
    <property type="project" value="UniProtKB-SubCell"/>
</dbReference>
<dbReference type="GO" id="GO:0050380">
    <property type="term" value="F:undecaprenyl-diphosphatase activity"/>
    <property type="evidence" value="ECO:0007669"/>
    <property type="project" value="UniProtKB-UniRule"/>
</dbReference>
<dbReference type="GO" id="GO:0071555">
    <property type="term" value="P:cell wall organization"/>
    <property type="evidence" value="ECO:0007669"/>
    <property type="project" value="UniProtKB-KW"/>
</dbReference>
<dbReference type="GO" id="GO:0009252">
    <property type="term" value="P:peptidoglycan biosynthetic process"/>
    <property type="evidence" value="ECO:0007669"/>
    <property type="project" value="UniProtKB-KW"/>
</dbReference>
<dbReference type="GO" id="GO:0008360">
    <property type="term" value="P:regulation of cell shape"/>
    <property type="evidence" value="ECO:0007669"/>
    <property type="project" value="UniProtKB-KW"/>
</dbReference>
<dbReference type="GO" id="GO:0046677">
    <property type="term" value="P:response to antibiotic"/>
    <property type="evidence" value="ECO:0007669"/>
    <property type="project" value="UniProtKB-UniRule"/>
</dbReference>
<dbReference type="HAMAP" id="MF_01006">
    <property type="entry name" value="Undec_diphosphatase"/>
    <property type="match status" value="1"/>
</dbReference>
<dbReference type="InterPro" id="IPR003824">
    <property type="entry name" value="UppP"/>
</dbReference>
<dbReference type="NCBIfam" id="NF001389">
    <property type="entry name" value="PRK00281.1-2"/>
    <property type="match status" value="1"/>
</dbReference>
<dbReference type="NCBIfam" id="NF001390">
    <property type="entry name" value="PRK00281.1-4"/>
    <property type="match status" value="1"/>
</dbReference>
<dbReference type="NCBIfam" id="TIGR00753">
    <property type="entry name" value="undec_PP_bacA"/>
    <property type="match status" value="1"/>
</dbReference>
<dbReference type="PANTHER" id="PTHR30622">
    <property type="entry name" value="UNDECAPRENYL-DIPHOSPHATASE"/>
    <property type="match status" value="1"/>
</dbReference>
<dbReference type="PANTHER" id="PTHR30622:SF3">
    <property type="entry name" value="UNDECAPRENYL-DIPHOSPHATASE"/>
    <property type="match status" value="1"/>
</dbReference>
<dbReference type="Pfam" id="PF02673">
    <property type="entry name" value="BacA"/>
    <property type="match status" value="1"/>
</dbReference>
<comment type="function">
    <text evidence="1">Catalyzes the dephosphorylation of undecaprenyl diphosphate (UPP). Confers resistance to bacitracin.</text>
</comment>
<comment type="catalytic activity">
    <reaction evidence="1">
        <text>di-trans,octa-cis-undecaprenyl diphosphate + H2O = di-trans,octa-cis-undecaprenyl phosphate + phosphate + H(+)</text>
        <dbReference type="Rhea" id="RHEA:28094"/>
        <dbReference type="ChEBI" id="CHEBI:15377"/>
        <dbReference type="ChEBI" id="CHEBI:15378"/>
        <dbReference type="ChEBI" id="CHEBI:43474"/>
        <dbReference type="ChEBI" id="CHEBI:58405"/>
        <dbReference type="ChEBI" id="CHEBI:60392"/>
        <dbReference type="EC" id="3.6.1.27"/>
    </reaction>
</comment>
<comment type="subcellular location">
    <subcellularLocation>
        <location evidence="1">Cell inner membrane</location>
        <topology evidence="1">Multi-pass membrane protein</topology>
    </subcellularLocation>
</comment>
<comment type="miscellaneous">
    <text>Bacitracin is thought to be involved in the inhibition of peptidoglycan synthesis by sequestering undecaprenyl diphosphate, thereby reducing the pool of lipid carrier available.</text>
</comment>
<comment type="similarity">
    <text evidence="1">Belongs to the UppP family.</text>
</comment>